<protein>
    <recommendedName>
        <fullName>Acylphosphatase</fullName>
        <ecNumber>3.6.1.7</ecNumber>
    </recommendedName>
    <alternativeName>
        <fullName>Acylphosphate phosphohydrolase</fullName>
    </alternativeName>
</protein>
<organism>
    <name type="scientific">Clostridium beijerinckii (strain ATCC 51743 / NCIMB 8052)</name>
    <name type="common">Clostridium acetobutylicum</name>
    <dbReference type="NCBI Taxonomy" id="290402"/>
    <lineage>
        <taxon>Bacteria</taxon>
        <taxon>Bacillati</taxon>
        <taxon>Bacillota</taxon>
        <taxon>Clostridia</taxon>
        <taxon>Eubacteriales</taxon>
        <taxon>Clostridiaceae</taxon>
        <taxon>Clostridium</taxon>
    </lineage>
</organism>
<reference key="1">
    <citation type="submission" date="2007-06" db="EMBL/GenBank/DDBJ databases">
        <title>Complete sequence of Clostridium beijerinckii NCIMB 8052.</title>
        <authorList>
            <consortium name="US DOE Joint Genome Institute"/>
            <person name="Copeland A."/>
            <person name="Lucas S."/>
            <person name="Lapidus A."/>
            <person name="Barry K."/>
            <person name="Detter J.C."/>
            <person name="Glavina del Rio T."/>
            <person name="Hammon N."/>
            <person name="Israni S."/>
            <person name="Dalin E."/>
            <person name="Tice H."/>
            <person name="Pitluck S."/>
            <person name="Sims D."/>
            <person name="Brettin T."/>
            <person name="Bruce D."/>
            <person name="Tapia R."/>
            <person name="Brainard J."/>
            <person name="Schmutz J."/>
            <person name="Larimer F."/>
            <person name="Land M."/>
            <person name="Hauser L."/>
            <person name="Kyrpides N."/>
            <person name="Mikhailova N."/>
            <person name="Bennet G."/>
            <person name="Cann I."/>
            <person name="Chen J.-S."/>
            <person name="Contreras A.L."/>
            <person name="Jones D."/>
            <person name="Kashket E."/>
            <person name="Mitchell W."/>
            <person name="Stoddard S."/>
            <person name="Schwarz W."/>
            <person name="Qureshi N."/>
            <person name="Young M."/>
            <person name="Shi Z."/>
            <person name="Ezeji T."/>
            <person name="White B."/>
            <person name="Blaschek H."/>
            <person name="Richardson P."/>
        </authorList>
    </citation>
    <scope>NUCLEOTIDE SEQUENCE [LARGE SCALE GENOMIC DNA]</scope>
    <source>
        <strain>ATCC 51743 / NCIMB 8052</strain>
    </source>
</reference>
<comment type="catalytic activity">
    <reaction>
        <text>an acyl phosphate + H2O = a carboxylate + phosphate + H(+)</text>
        <dbReference type="Rhea" id="RHEA:14965"/>
        <dbReference type="ChEBI" id="CHEBI:15377"/>
        <dbReference type="ChEBI" id="CHEBI:15378"/>
        <dbReference type="ChEBI" id="CHEBI:29067"/>
        <dbReference type="ChEBI" id="CHEBI:43474"/>
        <dbReference type="ChEBI" id="CHEBI:59918"/>
        <dbReference type="EC" id="3.6.1.7"/>
    </reaction>
</comment>
<comment type="similarity">
    <text evidence="2">Belongs to the acylphosphatase family.</text>
</comment>
<name>ACYP_CLOB8</name>
<keyword id="KW-0378">Hydrolase</keyword>
<gene>
    <name type="primary">acyP</name>
    <name type="ordered locus">Cbei_4233</name>
</gene>
<dbReference type="EC" id="3.6.1.7"/>
<dbReference type="EMBL" id="CP000721">
    <property type="protein sequence ID" value="ABR36343.1"/>
    <property type="molecule type" value="Genomic_DNA"/>
</dbReference>
<dbReference type="RefSeq" id="WP_012060390.1">
    <property type="nucleotide sequence ID" value="NC_009617.1"/>
</dbReference>
<dbReference type="SMR" id="A6M163"/>
<dbReference type="KEGG" id="cbe:Cbei_4233"/>
<dbReference type="eggNOG" id="COG1254">
    <property type="taxonomic scope" value="Bacteria"/>
</dbReference>
<dbReference type="HOGENOM" id="CLU_141932_2_0_9"/>
<dbReference type="Proteomes" id="UP000000565">
    <property type="component" value="Chromosome"/>
</dbReference>
<dbReference type="GO" id="GO:0003998">
    <property type="term" value="F:acylphosphatase activity"/>
    <property type="evidence" value="ECO:0007669"/>
    <property type="project" value="UniProtKB-EC"/>
</dbReference>
<dbReference type="Gene3D" id="3.30.70.100">
    <property type="match status" value="1"/>
</dbReference>
<dbReference type="InterPro" id="IPR020456">
    <property type="entry name" value="Acylphosphatase"/>
</dbReference>
<dbReference type="InterPro" id="IPR001792">
    <property type="entry name" value="Acylphosphatase-like_dom"/>
</dbReference>
<dbReference type="InterPro" id="IPR036046">
    <property type="entry name" value="Acylphosphatase-like_dom_sf"/>
</dbReference>
<dbReference type="InterPro" id="IPR017968">
    <property type="entry name" value="Acylphosphatase_CS"/>
</dbReference>
<dbReference type="PANTHER" id="PTHR47268">
    <property type="entry name" value="ACYLPHOSPHATASE"/>
    <property type="match status" value="1"/>
</dbReference>
<dbReference type="PANTHER" id="PTHR47268:SF4">
    <property type="entry name" value="ACYLPHOSPHATASE"/>
    <property type="match status" value="1"/>
</dbReference>
<dbReference type="Pfam" id="PF00708">
    <property type="entry name" value="Acylphosphatase"/>
    <property type="match status" value="1"/>
</dbReference>
<dbReference type="PRINTS" id="PR00112">
    <property type="entry name" value="ACYLPHPHTASE"/>
</dbReference>
<dbReference type="SUPFAM" id="SSF54975">
    <property type="entry name" value="Acylphosphatase/BLUF domain-like"/>
    <property type="match status" value="1"/>
</dbReference>
<dbReference type="PROSITE" id="PS00150">
    <property type="entry name" value="ACYLPHOSPHATASE_1"/>
    <property type="match status" value="1"/>
</dbReference>
<dbReference type="PROSITE" id="PS00151">
    <property type="entry name" value="ACYLPHOSPHATASE_2"/>
    <property type="match status" value="1"/>
</dbReference>
<dbReference type="PROSITE" id="PS51160">
    <property type="entry name" value="ACYLPHOSPHATASE_3"/>
    <property type="match status" value="1"/>
</dbReference>
<proteinExistence type="inferred from homology"/>
<sequence length="90" mass="10059">MIRYSAIVQGRVQGVGFRYFIQLTACKLSLTGWCKNLMNGNVEIEVQGLENNVLSFVSEIKKGNGFAKVSDIDLNILPVLDGEKKFSIKY</sequence>
<accession>A6M163</accession>
<feature type="chain" id="PRO_0000326684" description="Acylphosphatase">
    <location>
        <begin position="1"/>
        <end position="90"/>
    </location>
</feature>
<feature type="domain" description="Acylphosphatase-like" evidence="1">
    <location>
        <begin position="3"/>
        <end position="90"/>
    </location>
</feature>
<feature type="active site" evidence="1">
    <location>
        <position position="18"/>
    </location>
</feature>
<feature type="active site" evidence="1">
    <location>
        <position position="36"/>
    </location>
</feature>
<evidence type="ECO:0000255" key="1">
    <source>
        <dbReference type="PROSITE-ProRule" id="PRU00520"/>
    </source>
</evidence>
<evidence type="ECO:0000305" key="2"/>